<protein>
    <recommendedName>
        <fullName evidence="1">Guanylate kinase</fullName>
        <ecNumber evidence="1">2.7.4.8</ecNumber>
    </recommendedName>
    <alternativeName>
        <fullName evidence="1">GMP kinase</fullName>
    </alternativeName>
</protein>
<organism>
    <name type="scientific">Mycolicibacterium paratuberculosis (strain ATCC BAA-968 / K-10)</name>
    <name type="common">Mycobacterium paratuberculosis</name>
    <dbReference type="NCBI Taxonomy" id="262316"/>
    <lineage>
        <taxon>Bacteria</taxon>
        <taxon>Bacillati</taxon>
        <taxon>Actinomycetota</taxon>
        <taxon>Actinomycetes</taxon>
        <taxon>Mycobacteriales</taxon>
        <taxon>Mycobacteriaceae</taxon>
        <taxon>Mycobacterium</taxon>
        <taxon>Mycobacterium avium complex (MAC)</taxon>
    </lineage>
</organism>
<keyword id="KW-0067">ATP-binding</keyword>
<keyword id="KW-0963">Cytoplasm</keyword>
<keyword id="KW-0418">Kinase</keyword>
<keyword id="KW-0547">Nucleotide-binding</keyword>
<keyword id="KW-1185">Reference proteome</keyword>
<keyword id="KW-0808">Transferase</keyword>
<gene>
    <name evidence="1" type="primary">gmk</name>
    <name type="ordered locus">MAP_1123</name>
</gene>
<feature type="chain" id="PRO_0000170566" description="Guanylate kinase">
    <location>
        <begin position="1"/>
        <end position="223"/>
    </location>
</feature>
<feature type="domain" description="Guanylate kinase-like" evidence="1">
    <location>
        <begin position="21"/>
        <end position="201"/>
    </location>
</feature>
<feature type="region of interest" description="Disordered" evidence="2">
    <location>
        <begin position="1"/>
        <end position="22"/>
    </location>
</feature>
<feature type="region of interest" description="Disordered" evidence="2">
    <location>
        <begin position="204"/>
        <end position="223"/>
    </location>
</feature>
<feature type="compositionally biased region" description="Basic and acidic residues" evidence="2">
    <location>
        <begin position="7"/>
        <end position="19"/>
    </location>
</feature>
<feature type="compositionally biased region" description="Polar residues" evidence="2">
    <location>
        <begin position="212"/>
        <end position="223"/>
    </location>
</feature>
<feature type="binding site" evidence="1">
    <location>
        <begin position="28"/>
        <end position="35"/>
    </location>
    <ligand>
        <name>ATP</name>
        <dbReference type="ChEBI" id="CHEBI:30616"/>
    </ligand>
</feature>
<accession>P60553</accession>
<sequence>MTADGGPDVRHGTRPEPSGDGRVVVLSGPSAVGKSTVVRCLRERVPNLHFSVSATTRAPRPGEVDGVDYHFVSPARFQQLIDEGALLEWAEIHSGLHRSGTLAAPVRAAVARGCPVLIEVDLAGARAVKKAMPEALTVFLAPPSWEDLEARLIGRGTETPEVIARRLQTARVEMAAQHDFDRVVVNSRLESACAELVSLLVGTAPDRHDTSGRTGRQTTSHPD</sequence>
<proteinExistence type="inferred from homology"/>
<name>KGUA_MYCPA</name>
<evidence type="ECO:0000255" key="1">
    <source>
        <dbReference type="HAMAP-Rule" id="MF_00328"/>
    </source>
</evidence>
<evidence type="ECO:0000256" key="2">
    <source>
        <dbReference type="SAM" id="MobiDB-lite"/>
    </source>
</evidence>
<dbReference type="EC" id="2.7.4.8" evidence="1"/>
<dbReference type="EMBL" id="AE016958">
    <property type="protein sequence ID" value="AAS03440.1"/>
    <property type="molecule type" value="Genomic_DNA"/>
</dbReference>
<dbReference type="SMR" id="P60553"/>
<dbReference type="STRING" id="262316.MAP_1123"/>
<dbReference type="KEGG" id="mpa:MAP_1123"/>
<dbReference type="eggNOG" id="COG3709">
    <property type="taxonomic scope" value="Bacteria"/>
</dbReference>
<dbReference type="HOGENOM" id="CLU_001715_1_1_11"/>
<dbReference type="Proteomes" id="UP000000580">
    <property type="component" value="Chromosome"/>
</dbReference>
<dbReference type="GO" id="GO:0005829">
    <property type="term" value="C:cytosol"/>
    <property type="evidence" value="ECO:0007669"/>
    <property type="project" value="TreeGrafter"/>
</dbReference>
<dbReference type="GO" id="GO:0005524">
    <property type="term" value="F:ATP binding"/>
    <property type="evidence" value="ECO:0007669"/>
    <property type="project" value="UniProtKB-UniRule"/>
</dbReference>
<dbReference type="GO" id="GO:0004385">
    <property type="term" value="F:guanylate kinase activity"/>
    <property type="evidence" value="ECO:0007669"/>
    <property type="project" value="UniProtKB-UniRule"/>
</dbReference>
<dbReference type="CDD" id="cd00071">
    <property type="entry name" value="GMPK"/>
    <property type="match status" value="1"/>
</dbReference>
<dbReference type="FunFam" id="3.30.63.10:FF:000002">
    <property type="entry name" value="Guanylate kinase 1"/>
    <property type="match status" value="1"/>
</dbReference>
<dbReference type="Gene3D" id="3.30.63.10">
    <property type="entry name" value="Guanylate Kinase phosphate binding domain"/>
    <property type="match status" value="1"/>
</dbReference>
<dbReference type="Gene3D" id="3.40.50.300">
    <property type="entry name" value="P-loop containing nucleotide triphosphate hydrolases"/>
    <property type="match status" value="1"/>
</dbReference>
<dbReference type="HAMAP" id="MF_00328">
    <property type="entry name" value="Guanylate_kinase"/>
    <property type="match status" value="1"/>
</dbReference>
<dbReference type="InterPro" id="IPR008145">
    <property type="entry name" value="GK/Ca_channel_bsu"/>
</dbReference>
<dbReference type="InterPro" id="IPR008144">
    <property type="entry name" value="Guanylate_kin-like_dom"/>
</dbReference>
<dbReference type="InterPro" id="IPR017665">
    <property type="entry name" value="Guanylate_kinase"/>
</dbReference>
<dbReference type="InterPro" id="IPR020590">
    <property type="entry name" value="Guanylate_kinase_CS"/>
</dbReference>
<dbReference type="InterPro" id="IPR027417">
    <property type="entry name" value="P-loop_NTPase"/>
</dbReference>
<dbReference type="NCBIfam" id="TIGR03263">
    <property type="entry name" value="guanyl_kin"/>
    <property type="match status" value="1"/>
</dbReference>
<dbReference type="PANTHER" id="PTHR23117:SF13">
    <property type="entry name" value="GUANYLATE KINASE"/>
    <property type="match status" value="1"/>
</dbReference>
<dbReference type="PANTHER" id="PTHR23117">
    <property type="entry name" value="GUANYLATE KINASE-RELATED"/>
    <property type="match status" value="1"/>
</dbReference>
<dbReference type="Pfam" id="PF00625">
    <property type="entry name" value="Guanylate_kin"/>
    <property type="match status" value="1"/>
</dbReference>
<dbReference type="SMART" id="SM00072">
    <property type="entry name" value="GuKc"/>
    <property type="match status" value="1"/>
</dbReference>
<dbReference type="SUPFAM" id="SSF52540">
    <property type="entry name" value="P-loop containing nucleoside triphosphate hydrolases"/>
    <property type="match status" value="1"/>
</dbReference>
<dbReference type="PROSITE" id="PS00856">
    <property type="entry name" value="GUANYLATE_KINASE_1"/>
    <property type="match status" value="1"/>
</dbReference>
<dbReference type="PROSITE" id="PS50052">
    <property type="entry name" value="GUANYLATE_KINASE_2"/>
    <property type="match status" value="1"/>
</dbReference>
<comment type="function">
    <text evidence="1">Essential for recycling GMP and indirectly, cGMP.</text>
</comment>
<comment type="catalytic activity">
    <reaction evidence="1">
        <text>GMP + ATP = GDP + ADP</text>
        <dbReference type="Rhea" id="RHEA:20780"/>
        <dbReference type="ChEBI" id="CHEBI:30616"/>
        <dbReference type="ChEBI" id="CHEBI:58115"/>
        <dbReference type="ChEBI" id="CHEBI:58189"/>
        <dbReference type="ChEBI" id="CHEBI:456216"/>
        <dbReference type="EC" id="2.7.4.8"/>
    </reaction>
</comment>
<comment type="subcellular location">
    <subcellularLocation>
        <location evidence="1">Cytoplasm</location>
    </subcellularLocation>
</comment>
<comment type="similarity">
    <text evidence="1">Belongs to the guanylate kinase family.</text>
</comment>
<reference key="1">
    <citation type="journal article" date="2005" name="Proc. Natl. Acad. Sci. U.S.A.">
        <title>The complete genome sequence of Mycobacterium avium subspecies paratuberculosis.</title>
        <authorList>
            <person name="Li L."/>
            <person name="Bannantine J.P."/>
            <person name="Zhang Q."/>
            <person name="Amonsin A."/>
            <person name="May B.J."/>
            <person name="Alt D."/>
            <person name="Banerji N."/>
            <person name="Kanjilal S."/>
            <person name="Kapur V."/>
        </authorList>
    </citation>
    <scope>NUCLEOTIDE SEQUENCE [LARGE SCALE GENOMIC DNA]</scope>
    <source>
        <strain>ATCC BAA-968 / K-10</strain>
    </source>
</reference>